<name>DIK1B_XENTR</name>
<reference key="1">
    <citation type="submission" date="2006-11" db="EMBL/GenBank/DDBJ databases">
        <authorList>
            <consortium name="NIH - Xenopus Gene Collection (XGC) project"/>
        </authorList>
    </citation>
    <scope>NUCLEOTIDE SEQUENCE [LARGE SCALE MRNA]</scope>
    <source>
        <strain>N6</strain>
        <tissue>Oviduct</tissue>
    </source>
</reference>
<accession>A0JPE1</accession>
<keyword id="KW-1015">Disulfide bond</keyword>
<keyword id="KW-0256">Endoplasmic reticulum</keyword>
<keyword id="KW-0472">Membrane</keyword>
<keyword id="KW-1185">Reference proteome</keyword>
<keyword id="KW-0735">Signal-anchor</keyword>
<keyword id="KW-0812">Transmembrane</keyword>
<keyword id="KW-1133">Transmembrane helix</keyword>
<gene>
    <name type="primary">dipk1b</name>
    <name type="synonym">fam69b</name>
</gene>
<comment type="subcellular location">
    <subcellularLocation>
        <location evidence="1">Endoplasmic reticulum membrane</location>
        <topology evidence="1">Single-pass type II membrane protein</topology>
    </subcellularLocation>
</comment>
<comment type="PTM">
    <text evidence="1">Among the many cysteines in the lumenal domain, most are probably involved in disulfide bonds.</text>
</comment>
<comment type="similarity">
    <text evidence="3">Belongs to the DIPK family.</text>
</comment>
<feature type="chain" id="PRO_0000287234" description="Divergent protein kinase domain 1B">
    <location>
        <begin position="1"/>
        <end position="431"/>
    </location>
</feature>
<feature type="topological domain" description="Cytoplasmic" evidence="2">
    <location>
        <begin position="1"/>
        <end position="30"/>
    </location>
</feature>
<feature type="transmembrane region" description="Helical" evidence="2">
    <location>
        <begin position="31"/>
        <end position="51"/>
    </location>
</feature>
<feature type="topological domain" description="Lumenal" evidence="2">
    <location>
        <begin position="52"/>
        <end position="431"/>
    </location>
</feature>
<feature type="short sequence motif" description="May mediate ER retention" evidence="1">
    <location>
        <begin position="5"/>
        <end position="6"/>
    </location>
</feature>
<feature type="disulfide bond" evidence="3">
    <location>
        <begin position="57"/>
        <end position="94"/>
    </location>
</feature>
<feature type="disulfide bond" evidence="3">
    <location>
        <begin position="62"/>
        <end position="117"/>
    </location>
</feature>
<protein>
    <recommendedName>
        <fullName evidence="3">Divergent protein kinase domain 1B</fullName>
    </recommendedName>
    <alternativeName>
        <fullName>Protein FAM69B</fullName>
    </alternativeName>
</protein>
<dbReference type="EMBL" id="BC127379">
    <property type="protein sequence ID" value="AAI27380.1"/>
    <property type="molecule type" value="mRNA"/>
</dbReference>
<dbReference type="RefSeq" id="NP_001090694.1">
    <property type="nucleotide sequence ID" value="NM_001097225.1"/>
</dbReference>
<dbReference type="SMR" id="A0JPE1"/>
<dbReference type="FunCoup" id="A0JPE1">
    <property type="interactions" value="71"/>
</dbReference>
<dbReference type="PaxDb" id="8364-ENSXETP00000048300"/>
<dbReference type="DNASU" id="100036673"/>
<dbReference type="GeneID" id="100036673"/>
<dbReference type="KEGG" id="xtr:100036673"/>
<dbReference type="AGR" id="Xenbase:XB-GENE-960964"/>
<dbReference type="CTD" id="138311"/>
<dbReference type="Xenbase" id="XB-GENE-960964">
    <property type="gene designation" value="dipk1b"/>
</dbReference>
<dbReference type="eggNOG" id="ENOG502QU5P">
    <property type="taxonomic scope" value="Eukaryota"/>
</dbReference>
<dbReference type="InParanoid" id="A0JPE1"/>
<dbReference type="OMA" id="WALLHIN"/>
<dbReference type="OrthoDB" id="8860232at2759"/>
<dbReference type="Proteomes" id="UP000008143">
    <property type="component" value="Chromosome 8"/>
</dbReference>
<dbReference type="GO" id="GO:0005789">
    <property type="term" value="C:endoplasmic reticulum membrane"/>
    <property type="evidence" value="ECO:0007669"/>
    <property type="project" value="UniProtKB-SubCell"/>
</dbReference>
<dbReference type="Gene3D" id="1.10.238.10">
    <property type="entry name" value="EF-hand"/>
    <property type="match status" value="1"/>
</dbReference>
<dbReference type="InterPro" id="IPR011992">
    <property type="entry name" value="EF-hand-dom_pair"/>
</dbReference>
<dbReference type="InterPro" id="IPR022049">
    <property type="entry name" value="FAM69_kinase_dom"/>
</dbReference>
<dbReference type="InterPro" id="IPR029244">
    <property type="entry name" value="FAM69_N"/>
</dbReference>
<dbReference type="PANTHER" id="PTHR21093:SF3">
    <property type="entry name" value="DIVERGENT PROTEIN KINASE DOMAIN 1B"/>
    <property type="match status" value="1"/>
</dbReference>
<dbReference type="PANTHER" id="PTHR21093">
    <property type="entry name" value="DIVERGENT PROTEIN KINASE DOMAIN 1C-RELATED"/>
    <property type="match status" value="1"/>
</dbReference>
<dbReference type="Pfam" id="PF12260">
    <property type="entry name" value="PIP49_C"/>
    <property type="match status" value="1"/>
</dbReference>
<dbReference type="Pfam" id="PF14875">
    <property type="entry name" value="PIP49_N"/>
    <property type="match status" value="1"/>
</dbReference>
<dbReference type="SMART" id="SM01299">
    <property type="entry name" value="PIP49_N"/>
    <property type="match status" value="1"/>
</dbReference>
<dbReference type="SUPFAM" id="SSF47473">
    <property type="entry name" value="EF-hand"/>
    <property type="match status" value="1"/>
</dbReference>
<evidence type="ECO:0000250" key="1"/>
<evidence type="ECO:0000255" key="2"/>
<evidence type="ECO:0000305" key="3"/>
<organism>
    <name type="scientific">Xenopus tropicalis</name>
    <name type="common">Western clawed frog</name>
    <name type="synonym">Silurana tropicalis</name>
    <dbReference type="NCBI Taxonomy" id="8364"/>
    <lineage>
        <taxon>Eukaryota</taxon>
        <taxon>Metazoa</taxon>
        <taxon>Chordata</taxon>
        <taxon>Craniata</taxon>
        <taxon>Vertebrata</taxon>
        <taxon>Euteleostomi</taxon>
        <taxon>Amphibia</taxon>
        <taxon>Batrachia</taxon>
        <taxon>Anura</taxon>
        <taxon>Pipoidea</taxon>
        <taxon>Pipidae</taxon>
        <taxon>Xenopodinae</taxon>
        <taxon>Xenopus</taxon>
        <taxon>Silurana</taxon>
    </lineage>
</organism>
<proteinExistence type="evidence at transcript level"/>
<sequence>MRKLRRLVHMVLFCPISKGLQSRLPGIKVKYLFLAWLSVFVGSWVVYMHYSSYSELCRGHVCRMIICDQYKKGIISGSACKDLCDERTLVFQQCLSSSPTQQVYSGRWRDREVIIKCGVEETLKADSNPDSPPRRELVLFDKPTRGTSMDEFKEMLGNFLKANLGEQVSLTALVSQILTMADVNNDGKVSLAEAKSIWALLHLNEILLMLSLREKEHTSQLLGHCGDLYVTEKIPHDSLYGSQIPGFLQTLLPSPVHRLVHQWCAPAWPRRAKIAIGLLEFVEEIFHGTYGSFFICDSSFKNIGYNEKYDFKVVDLRKVATEMTIRGFLKGRHCEQNSDCTFGSDCTAACDKLMKQCRNDVIQPNLAKACQLLQDYLLYGSPSDLREELQKQLRTCMTLSGLASQMEVHHSLILNNLKTLLWKKISNTKYS</sequence>